<feature type="signal peptide" evidence="2 3">
    <location>
        <begin position="1"/>
        <end position="21"/>
    </location>
</feature>
<feature type="chain" id="PRO_0000035205" description="Beta-insect depressant toxin BmKITa">
    <location>
        <begin position="22"/>
        <end position="82"/>
    </location>
</feature>
<feature type="domain" description="LCN-type CS-alpha/beta" evidence="1">
    <location>
        <begin position="22"/>
        <end position="82"/>
    </location>
</feature>
<feature type="modified residue" description="Glycine amide" evidence="3">
    <location>
        <position position="82"/>
    </location>
</feature>
<feature type="disulfide bond" evidence="1">
    <location>
        <begin position="31"/>
        <end position="81"/>
    </location>
</feature>
<feature type="disulfide bond" evidence="1">
    <location>
        <begin position="35"/>
        <end position="56"/>
    </location>
</feature>
<feature type="disulfide bond" evidence="1">
    <location>
        <begin position="42"/>
        <end position="63"/>
    </location>
</feature>
<feature type="disulfide bond" evidence="1">
    <location>
        <begin position="46"/>
        <end position="65"/>
    </location>
</feature>
<feature type="sequence conflict" description="In Ref. 2." evidence="4" ref="2">
    <original>Q</original>
    <variation>E</variation>
    <location>
        <position position="66"/>
    </location>
</feature>
<proteinExistence type="evidence at protein level"/>
<evidence type="ECO:0000255" key="1">
    <source>
        <dbReference type="PROSITE-ProRule" id="PRU01210"/>
    </source>
</evidence>
<evidence type="ECO:0000269" key="2">
    <source>
    </source>
</evidence>
<evidence type="ECO:0000269" key="3">
    <source>
    </source>
</evidence>
<evidence type="ECO:0000305" key="4"/>
<protein>
    <recommendedName>
        <fullName>Beta-insect depressant toxin BmKITa</fullName>
        <shortName>BmK ITa</shortName>
    </recommendedName>
    <alternativeName>
        <fullName>BmK dITAP3</fullName>
    </alternativeName>
</protein>
<sequence length="85" mass="9312">MKLFLLLLISASMLIDGLVNADGYIRGSNGCKVSCLWGNEGCNKECRAYGASYGYCWTWGLACWCQGLPDDKTWKSESNTCGGKK</sequence>
<accession>Q9XY87</accession>
<comment type="function">
    <text evidence="2">Depressant insect beta-toxins cause a transient contraction paralysis followed by a slow flaccid paralysis. They bind voltage-independently at site-4 of sodium channels (Nav) and shift the voltage of activation toward more negative potentials thereby affecting sodium channel activation and promoting spontaneous and repetitive firing. This toxin also displays an evident analgesic effect but is devoid of any toxicity on mice.</text>
</comment>
<comment type="subcellular location">
    <subcellularLocation>
        <location>Secreted</location>
    </subcellularLocation>
</comment>
<comment type="tissue specificity">
    <text>Expressed by the venom gland.</text>
</comment>
<comment type="domain">
    <text evidence="4">Has the structural arrangement of an alpha-helix connected to antiparallel beta-sheets by disulfide bonds (CS-alpha/beta).</text>
</comment>
<comment type="mass spectrometry" mass="6732.1" method="Electrospray" evidence="3"/>
<comment type="mass spectrometry" mass="6722.7" error="10.8" method="MALDI" evidence="2"/>
<comment type="similarity">
    <text evidence="4">Belongs to the long (4 C-C) scorpion toxin superfamily. Sodium channel inhibitor family. Beta subfamily.</text>
</comment>
<reference key="1">
    <citation type="journal article" date="2003" name="J. Pept. Res.">
        <title>Purification of two depressant insect neurotoxins and their gene cloning from the scorpion Buthus martensi Karsch.</title>
        <authorList>
            <person name="Wang C.-G."/>
            <person name="Ling M.-H."/>
            <person name="Chi C.-W."/>
            <person name="Wang D.-C."/>
            <person name="Pelhate M."/>
        </authorList>
    </citation>
    <scope>NUCLEOTIDE SEQUENCE [MRNA]</scope>
    <scope>PROTEIN SEQUENCE OF 22-54</scope>
    <scope>AMIDATION AT GLY-82</scope>
    <scope>ELECTROPHYSIOLOGICAL CHARACTERIZATION</scope>
    <scope>MASS SPECTROMETRY</scope>
    <source>
        <tissue>Venom</tissue>
        <tissue>Venom gland</tissue>
    </source>
</reference>
<reference key="2">
    <citation type="journal article" date="2001" name="Biochim. Biophys. Acta">
        <title>A depressant insect toxin with a novel analgesic effect from scorpion Buthus martensii Karsch.</title>
        <authorList>
            <person name="Guan R.-J."/>
            <person name="Wang C.-G."/>
            <person name="Wang M."/>
            <person name="Wang D.-C."/>
        </authorList>
    </citation>
    <scope>NUCLEOTIDE SEQUENCE [MRNA] OF 22-85</scope>
    <scope>PROTEIN SEQUENCE OF 22-36</scope>
    <scope>MASS SPECTROMETRY</scope>
    <scope>FUNCTION</scope>
    <source>
        <tissue>Venom</tissue>
        <tissue>Venom gland</tissue>
    </source>
</reference>
<reference key="3">
    <citation type="journal article" date="2001" name="Acta Crystallogr. D">
        <title>Crystallization and preliminary X-ray analysis of a depressant insect toxin from the scorpion Buthus martensii Karsch.</title>
        <authorList>
            <person name="Guan R.-J."/>
            <person name="Xiang Y."/>
            <person name="Wang M."/>
            <person name="Li G.-P."/>
            <person name="Wang D.-C."/>
        </authorList>
    </citation>
    <scope>X-RAY CRYSTALLOGRAPHY (2.6 ANGSTROMS)</scope>
</reference>
<keyword id="KW-0027">Amidation</keyword>
<keyword id="KW-0903">Direct protein sequencing</keyword>
<keyword id="KW-1015">Disulfide bond</keyword>
<keyword id="KW-0872">Ion channel impairing toxin</keyword>
<keyword id="KW-0528">Neurotoxin</keyword>
<keyword id="KW-0964">Secreted</keyword>
<keyword id="KW-0732">Signal</keyword>
<keyword id="KW-0800">Toxin</keyword>
<keyword id="KW-0738">Voltage-gated sodium channel impairing toxin</keyword>
<organism>
    <name type="scientific">Olivierus martensii</name>
    <name type="common">Manchurian scorpion</name>
    <name type="synonym">Mesobuthus martensii</name>
    <dbReference type="NCBI Taxonomy" id="34649"/>
    <lineage>
        <taxon>Eukaryota</taxon>
        <taxon>Metazoa</taxon>
        <taxon>Ecdysozoa</taxon>
        <taxon>Arthropoda</taxon>
        <taxon>Chelicerata</taxon>
        <taxon>Arachnida</taxon>
        <taxon>Scorpiones</taxon>
        <taxon>Buthida</taxon>
        <taxon>Buthoidea</taxon>
        <taxon>Buthidae</taxon>
        <taxon>Olivierus</taxon>
    </lineage>
</organism>
<dbReference type="EMBL" id="AF064821">
    <property type="protein sequence ID" value="AAD31592.1"/>
    <property type="molecule type" value="mRNA"/>
</dbReference>
<dbReference type="SMR" id="Q9XY87"/>
<dbReference type="GO" id="GO:0005576">
    <property type="term" value="C:extracellular region"/>
    <property type="evidence" value="ECO:0007669"/>
    <property type="project" value="UniProtKB-SubCell"/>
</dbReference>
<dbReference type="GO" id="GO:0019871">
    <property type="term" value="F:sodium channel inhibitor activity"/>
    <property type="evidence" value="ECO:0007669"/>
    <property type="project" value="InterPro"/>
</dbReference>
<dbReference type="GO" id="GO:0090729">
    <property type="term" value="F:toxin activity"/>
    <property type="evidence" value="ECO:0007669"/>
    <property type="project" value="UniProtKB-KW"/>
</dbReference>
<dbReference type="GO" id="GO:0006952">
    <property type="term" value="P:defense response"/>
    <property type="evidence" value="ECO:0007669"/>
    <property type="project" value="InterPro"/>
</dbReference>
<dbReference type="CDD" id="cd23106">
    <property type="entry name" value="neurotoxins_LC_scorpion"/>
    <property type="match status" value="1"/>
</dbReference>
<dbReference type="FunFam" id="3.30.30.10:FF:000002">
    <property type="entry name" value="Alpha-like toxin BmK-M1"/>
    <property type="match status" value="1"/>
</dbReference>
<dbReference type="Gene3D" id="3.30.30.10">
    <property type="entry name" value="Knottin, scorpion toxin-like"/>
    <property type="match status" value="1"/>
</dbReference>
<dbReference type="InterPro" id="IPR044062">
    <property type="entry name" value="LCN-type_CS_alpha_beta_dom"/>
</dbReference>
<dbReference type="InterPro" id="IPR003614">
    <property type="entry name" value="Scorpion_toxin-like"/>
</dbReference>
<dbReference type="InterPro" id="IPR036574">
    <property type="entry name" value="Scorpion_toxin-like_sf"/>
</dbReference>
<dbReference type="InterPro" id="IPR018218">
    <property type="entry name" value="Scorpion_toxinL"/>
</dbReference>
<dbReference type="InterPro" id="IPR002061">
    <property type="entry name" value="Scorpion_toxinL/defensin"/>
</dbReference>
<dbReference type="Pfam" id="PF00537">
    <property type="entry name" value="Toxin_3"/>
    <property type="match status" value="1"/>
</dbReference>
<dbReference type="PRINTS" id="PR00285">
    <property type="entry name" value="SCORPNTOXIN"/>
</dbReference>
<dbReference type="SMART" id="SM00505">
    <property type="entry name" value="Knot1"/>
    <property type="match status" value="1"/>
</dbReference>
<dbReference type="SUPFAM" id="SSF57095">
    <property type="entry name" value="Scorpion toxin-like"/>
    <property type="match status" value="1"/>
</dbReference>
<dbReference type="PROSITE" id="PS51863">
    <property type="entry name" value="LCN_CSAB"/>
    <property type="match status" value="1"/>
</dbReference>
<name>SIXA_OLIMR</name>